<organism>
    <name type="scientific">Xanthomonas oryzae pv. oryzae (strain PXO99A)</name>
    <dbReference type="NCBI Taxonomy" id="360094"/>
    <lineage>
        <taxon>Bacteria</taxon>
        <taxon>Pseudomonadati</taxon>
        <taxon>Pseudomonadota</taxon>
        <taxon>Gammaproteobacteria</taxon>
        <taxon>Lysobacterales</taxon>
        <taxon>Lysobacteraceae</taxon>
        <taxon>Xanthomonas</taxon>
    </lineage>
</organism>
<sequence length="153" mass="17064">MSHPAYELPIDVNQIQALIPHRYPFLLIDRVIELDLEAKRIVGQKNVSINEPFFQGHFPTRPVMPGVLIIEALAQAGGVMTQLGLGRDALSKLFYMVKVDNARFNKQVVPGDVLILEVQMKRLIRNMGCYYGEAKVNGEIVASAEIMCAAARE</sequence>
<feature type="chain" id="PRO_1000197304" description="3-hydroxyacyl-[acyl-carrier-protein] dehydratase FabZ">
    <location>
        <begin position="1"/>
        <end position="153"/>
    </location>
</feature>
<feature type="active site" evidence="1">
    <location>
        <position position="57"/>
    </location>
</feature>
<reference key="1">
    <citation type="journal article" date="2008" name="BMC Genomics">
        <title>Genome sequence and rapid evolution of the rice pathogen Xanthomonas oryzae pv. oryzae PXO99A.</title>
        <authorList>
            <person name="Salzberg S.L."/>
            <person name="Sommer D.D."/>
            <person name="Schatz M.C."/>
            <person name="Phillippy A.M."/>
            <person name="Rabinowicz P.D."/>
            <person name="Tsuge S."/>
            <person name="Furutani A."/>
            <person name="Ochiai H."/>
            <person name="Delcher A.L."/>
            <person name="Kelley D."/>
            <person name="Madupu R."/>
            <person name="Puiu D."/>
            <person name="Radune D."/>
            <person name="Shumway M."/>
            <person name="Trapnell C."/>
            <person name="Aparna G."/>
            <person name="Jha G."/>
            <person name="Pandey A."/>
            <person name="Patil P.B."/>
            <person name="Ishihara H."/>
            <person name="Meyer D.F."/>
            <person name="Szurek B."/>
            <person name="Verdier V."/>
            <person name="Koebnik R."/>
            <person name="Dow J.M."/>
            <person name="Ryan R.P."/>
            <person name="Hirata H."/>
            <person name="Tsuyumu S."/>
            <person name="Won Lee S."/>
            <person name="Seo Y.-S."/>
            <person name="Sriariyanum M."/>
            <person name="Ronald P.C."/>
            <person name="Sonti R.V."/>
            <person name="Van Sluys M.-A."/>
            <person name="Leach J.E."/>
            <person name="White F.F."/>
            <person name="Bogdanove A.J."/>
        </authorList>
    </citation>
    <scope>NUCLEOTIDE SEQUENCE [LARGE SCALE GENOMIC DNA]</scope>
    <source>
        <strain>PXO99A</strain>
    </source>
</reference>
<dbReference type="EC" id="4.2.1.59" evidence="1"/>
<dbReference type="EMBL" id="CP000967">
    <property type="protein sequence ID" value="ACD59571.1"/>
    <property type="molecule type" value="Genomic_DNA"/>
</dbReference>
<dbReference type="RefSeq" id="WP_011258690.1">
    <property type="nucleotide sequence ID" value="NC_010717.2"/>
</dbReference>
<dbReference type="SMR" id="B2SR10"/>
<dbReference type="KEGG" id="xop:PXO_01118"/>
<dbReference type="eggNOG" id="COG0764">
    <property type="taxonomic scope" value="Bacteria"/>
</dbReference>
<dbReference type="HOGENOM" id="CLU_078912_1_0_6"/>
<dbReference type="Proteomes" id="UP000001740">
    <property type="component" value="Chromosome"/>
</dbReference>
<dbReference type="GO" id="GO:0005737">
    <property type="term" value="C:cytoplasm"/>
    <property type="evidence" value="ECO:0007669"/>
    <property type="project" value="UniProtKB-SubCell"/>
</dbReference>
<dbReference type="GO" id="GO:0016020">
    <property type="term" value="C:membrane"/>
    <property type="evidence" value="ECO:0007669"/>
    <property type="project" value="GOC"/>
</dbReference>
<dbReference type="GO" id="GO:0019171">
    <property type="term" value="F:(3R)-hydroxyacyl-[acyl-carrier-protein] dehydratase activity"/>
    <property type="evidence" value="ECO:0007669"/>
    <property type="project" value="UniProtKB-EC"/>
</dbReference>
<dbReference type="GO" id="GO:0006633">
    <property type="term" value="P:fatty acid biosynthetic process"/>
    <property type="evidence" value="ECO:0007669"/>
    <property type="project" value="UniProtKB-UniRule"/>
</dbReference>
<dbReference type="GO" id="GO:0009245">
    <property type="term" value="P:lipid A biosynthetic process"/>
    <property type="evidence" value="ECO:0007669"/>
    <property type="project" value="UniProtKB-UniRule"/>
</dbReference>
<dbReference type="CDD" id="cd01288">
    <property type="entry name" value="FabZ"/>
    <property type="match status" value="1"/>
</dbReference>
<dbReference type="FunFam" id="3.10.129.10:FF:000001">
    <property type="entry name" value="3-hydroxyacyl-[acyl-carrier-protein] dehydratase FabZ"/>
    <property type="match status" value="1"/>
</dbReference>
<dbReference type="Gene3D" id="3.10.129.10">
    <property type="entry name" value="Hotdog Thioesterase"/>
    <property type="match status" value="1"/>
</dbReference>
<dbReference type="HAMAP" id="MF_00406">
    <property type="entry name" value="FabZ"/>
    <property type="match status" value="1"/>
</dbReference>
<dbReference type="InterPro" id="IPR013114">
    <property type="entry name" value="FabA_FabZ"/>
</dbReference>
<dbReference type="InterPro" id="IPR010084">
    <property type="entry name" value="FabZ"/>
</dbReference>
<dbReference type="InterPro" id="IPR029069">
    <property type="entry name" value="HotDog_dom_sf"/>
</dbReference>
<dbReference type="NCBIfam" id="TIGR01750">
    <property type="entry name" value="fabZ"/>
    <property type="match status" value="1"/>
</dbReference>
<dbReference type="NCBIfam" id="NF000582">
    <property type="entry name" value="PRK00006.1"/>
    <property type="match status" value="1"/>
</dbReference>
<dbReference type="PANTHER" id="PTHR30272">
    <property type="entry name" value="3-HYDROXYACYL-[ACYL-CARRIER-PROTEIN] DEHYDRATASE"/>
    <property type="match status" value="1"/>
</dbReference>
<dbReference type="PANTHER" id="PTHR30272:SF1">
    <property type="entry name" value="3-HYDROXYACYL-[ACYL-CARRIER-PROTEIN] DEHYDRATASE"/>
    <property type="match status" value="1"/>
</dbReference>
<dbReference type="Pfam" id="PF07977">
    <property type="entry name" value="FabA"/>
    <property type="match status" value="1"/>
</dbReference>
<dbReference type="SUPFAM" id="SSF54637">
    <property type="entry name" value="Thioesterase/thiol ester dehydrase-isomerase"/>
    <property type="match status" value="1"/>
</dbReference>
<accession>B2SR10</accession>
<protein>
    <recommendedName>
        <fullName evidence="1">3-hydroxyacyl-[acyl-carrier-protein] dehydratase FabZ</fullName>
        <ecNumber evidence="1">4.2.1.59</ecNumber>
    </recommendedName>
    <alternativeName>
        <fullName evidence="1">(3R)-hydroxymyristoyl-[acyl-carrier-protein] dehydratase</fullName>
        <shortName evidence="1">(3R)-hydroxymyristoyl-ACP dehydrase</shortName>
    </alternativeName>
    <alternativeName>
        <fullName evidence="1">Beta-hydroxyacyl-ACP dehydratase</fullName>
    </alternativeName>
</protein>
<evidence type="ECO:0000255" key="1">
    <source>
        <dbReference type="HAMAP-Rule" id="MF_00406"/>
    </source>
</evidence>
<comment type="function">
    <text evidence="1">Involved in unsaturated fatty acids biosynthesis. Catalyzes the dehydration of short chain beta-hydroxyacyl-ACPs and long chain saturated and unsaturated beta-hydroxyacyl-ACPs.</text>
</comment>
<comment type="catalytic activity">
    <reaction evidence="1">
        <text>a (3R)-hydroxyacyl-[ACP] = a (2E)-enoyl-[ACP] + H2O</text>
        <dbReference type="Rhea" id="RHEA:13097"/>
        <dbReference type="Rhea" id="RHEA-COMP:9925"/>
        <dbReference type="Rhea" id="RHEA-COMP:9945"/>
        <dbReference type="ChEBI" id="CHEBI:15377"/>
        <dbReference type="ChEBI" id="CHEBI:78784"/>
        <dbReference type="ChEBI" id="CHEBI:78827"/>
        <dbReference type="EC" id="4.2.1.59"/>
    </reaction>
</comment>
<comment type="subcellular location">
    <subcellularLocation>
        <location evidence="1">Cytoplasm</location>
    </subcellularLocation>
</comment>
<comment type="similarity">
    <text evidence="1">Belongs to the thioester dehydratase family. FabZ subfamily.</text>
</comment>
<name>FABZ_XANOP</name>
<gene>
    <name evidence="1" type="primary">fabZ</name>
    <name type="ordered locus">PXO_01118</name>
</gene>
<keyword id="KW-0963">Cytoplasm</keyword>
<keyword id="KW-0441">Lipid A biosynthesis</keyword>
<keyword id="KW-0444">Lipid biosynthesis</keyword>
<keyword id="KW-0443">Lipid metabolism</keyword>
<keyword id="KW-0456">Lyase</keyword>
<proteinExistence type="inferred from homology"/>